<dbReference type="EC" id="3.5.4.5" evidence="1"/>
<dbReference type="EMBL" id="FM180568">
    <property type="protein sequence ID" value="CAS09837.1"/>
    <property type="molecule type" value="Genomic_DNA"/>
</dbReference>
<dbReference type="RefSeq" id="WP_000553553.1">
    <property type="nucleotide sequence ID" value="NC_011601.1"/>
</dbReference>
<dbReference type="SMR" id="B7UFF9"/>
<dbReference type="KEGG" id="ecg:E2348C_2289"/>
<dbReference type="HOGENOM" id="CLU_052424_0_0_6"/>
<dbReference type="Proteomes" id="UP000008205">
    <property type="component" value="Chromosome"/>
</dbReference>
<dbReference type="GO" id="GO:0005829">
    <property type="term" value="C:cytosol"/>
    <property type="evidence" value="ECO:0007669"/>
    <property type="project" value="TreeGrafter"/>
</dbReference>
<dbReference type="GO" id="GO:0004126">
    <property type="term" value="F:cytidine deaminase activity"/>
    <property type="evidence" value="ECO:0007669"/>
    <property type="project" value="UniProtKB-UniRule"/>
</dbReference>
<dbReference type="GO" id="GO:0042802">
    <property type="term" value="F:identical protein binding"/>
    <property type="evidence" value="ECO:0007669"/>
    <property type="project" value="UniProtKB-ARBA"/>
</dbReference>
<dbReference type="GO" id="GO:0008270">
    <property type="term" value="F:zinc ion binding"/>
    <property type="evidence" value="ECO:0007669"/>
    <property type="project" value="UniProtKB-UniRule"/>
</dbReference>
<dbReference type="GO" id="GO:0009972">
    <property type="term" value="P:cytidine deamination"/>
    <property type="evidence" value="ECO:0007669"/>
    <property type="project" value="InterPro"/>
</dbReference>
<dbReference type="CDD" id="cd01283">
    <property type="entry name" value="cytidine_deaminase"/>
    <property type="match status" value="2"/>
</dbReference>
<dbReference type="FunFam" id="3.40.140.10:FF:000006">
    <property type="entry name" value="Cytidine deaminase"/>
    <property type="match status" value="1"/>
</dbReference>
<dbReference type="FunFam" id="3.40.140.10:FF:000007">
    <property type="entry name" value="Cytidine deaminase"/>
    <property type="match status" value="1"/>
</dbReference>
<dbReference type="Gene3D" id="3.40.140.10">
    <property type="entry name" value="Cytidine Deaminase, domain 2"/>
    <property type="match status" value="2"/>
</dbReference>
<dbReference type="HAMAP" id="MF_01558">
    <property type="entry name" value="Cyt_deam"/>
    <property type="match status" value="1"/>
</dbReference>
<dbReference type="InterPro" id="IPR016192">
    <property type="entry name" value="APOBEC/CMP_deaminase_Zn-bd"/>
</dbReference>
<dbReference type="InterPro" id="IPR002125">
    <property type="entry name" value="CMP_dCMP_dom"/>
</dbReference>
<dbReference type="InterPro" id="IPR013171">
    <property type="entry name" value="Cyd/dCyd_deaminase_Zn-bd"/>
</dbReference>
<dbReference type="InterPro" id="IPR050202">
    <property type="entry name" value="Cyt/Deoxycyt_deaminase"/>
</dbReference>
<dbReference type="InterPro" id="IPR006263">
    <property type="entry name" value="Cyt_deam_dimer"/>
</dbReference>
<dbReference type="InterPro" id="IPR016193">
    <property type="entry name" value="Cytidine_deaminase-like"/>
</dbReference>
<dbReference type="InterPro" id="IPR020797">
    <property type="entry name" value="Cytidine_deaminase_bacteria"/>
</dbReference>
<dbReference type="NCBIfam" id="TIGR01355">
    <property type="entry name" value="cyt_deam_dimer"/>
    <property type="match status" value="1"/>
</dbReference>
<dbReference type="NCBIfam" id="NF006537">
    <property type="entry name" value="PRK09027.1"/>
    <property type="match status" value="1"/>
</dbReference>
<dbReference type="PANTHER" id="PTHR11644">
    <property type="entry name" value="CYTIDINE DEAMINASE"/>
    <property type="match status" value="1"/>
</dbReference>
<dbReference type="PANTHER" id="PTHR11644:SF2">
    <property type="entry name" value="CYTIDINE DEAMINASE"/>
    <property type="match status" value="1"/>
</dbReference>
<dbReference type="Pfam" id="PF00383">
    <property type="entry name" value="dCMP_cyt_deam_1"/>
    <property type="match status" value="1"/>
</dbReference>
<dbReference type="Pfam" id="PF08211">
    <property type="entry name" value="dCMP_cyt_deam_2"/>
    <property type="match status" value="1"/>
</dbReference>
<dbReference type="PIRSF" id="PIRSF006334">
    <property type="entry name" value="Cdd_plus_pseudo"/>
    <property type="match status" value="1"/>
</dbReference>
<dbReference type="SUPFAM" id="SSF53927">
    <property type="entry name" value="Cytidine deaminase-like"/>
    <property type="match status" value="2"/>
</dbReference>
<dbReference type="PROSITE" id="PS00903">
    <property type="entry name" value="CYT_DCMP_DEAMINASES_1"/>
    <property type="match status" value="1"/>
</dbReference>
<dbReference type="PROSITE" id="PS51747">
    <property type="entry name" value="CYT_DCMP_DEAMINASES_2"/>
    <property type="match status" value="2"/>
</dbReference>
<gene>
    <name evidence="1" type="primary">cdd</name>
    <name type="ordered locus">E2348C_2289</name>
</gene>
<comment type="function">
    <text evidence="1">This enzyme scavenges exogenous and endogenous cytidine and 2'-deoxycytidine for UMP synthesis.</text>
</comment>
<comment type="catalytic activity">
    <reaction evidence="1">
        <text>cytidine + H2O + H(+) = uridine + NH4(+)</text>
        <dbReference type="Rhea" id="RHEA:16069"/>
        <dbReference type="ChEBI" id="CHEBI:15377"/>
        <dbReference type="ChEBI" id="CHEBI:15378"/>
        <dbReference type="ChEBI" id="CHEBI:16704"/>
        <dbReference type="ChEBI" id="CHEBI:17562"/>
        <dbReference type="ChEBI" id="CHEBI:28938"/>
        <dbReference type="EC" id="3.5.4.5"/>
    </reaction>
</comment>
<comment type="catalytic activity">
    <reaction evidence="1">
        <text>2'-deoxycytidine + H2O + H(+) = 2'-deoxyuridine + NH4(+)</text>
        <dbReference type="Rhea" id="RHEA:13433"/>
        <dbReference type="ChEBI" id="CHEBI:15377"/>
        <dbReference type="ChEBI" id="CHEBI:15378"/>
        <dbReference type="ChEBI" id="CHEBI:15698"/>
        <dbReference type="ChEBI" id="CHEBI:16450"/>
        <dbReference type="ChEBI" id="CHEBI:28938"/>
        <dbReference type="EC" id="3.5.4.5"/>
    </reaction>
</comment>
<comment type="cofactor">
    <cofactor evidence="1">
        <name>Zn(2+)</name>
        <dbReference type="ChEBI" id="CHEBI:29105"/>
    </cofactor>
    <text evidence="1">Binds 1 zinc ion.</text>
</comment>
<comment type="subunit">
    <text evidence="1">Homodimer.</text>
</comment>
<comment type="similarity">
    <text evidence="1">Belongs to the cytidine and deoxycytidylate deaminase family.</text>
</comment>
<keyword id="KW-0378">Hydrolase</keyword>
<keyword id="KW-0479">Metal-binding</keyword>
<keyword id="KW-1185">Reference proteome</keyword>
<keyword id="KW-0862">Zinc</keyword>
<feature type="chain" id="PRO_1000185414" description="Cytidine deaminase">
    <location>
        <begin position="1"/>
        <end position="294"/>
    </location>
</feature>
<feature type="domain" description="CMP/dCMP-type deaminase 1" evidence="2">
    <location>
        <begin position="48"/>
        <end position="168"/>
    </location>
</feature>
<feature type="domain" description="CMP/dCMP-type deaminase 2" evidence="2">
    <location>
        <begin position="186"/>
        <end position="294"/>
    </location>
</feature>
<feature type="active site" description="Proton donor" evidence="1">
    <location>
        <position position="104"/>
    </location>
</feature>
<feature type="binding site" evidence="1">
    <location>
        <begin position="89"/>
        <end position="91"/>
    </location>
    <ligand>
        <name>substrate</name>
    </ligand>
</feature>
<feature type="binding site" evidence="1">
    <location>
        <position position="102"/>
    </location>
    <ligand>
        <name>Zn(2+)</name>
        <dbReference type="ChEBI" id="CHEBI:29105"/>
        <note>catalytic</note>
    </ligand>
</feature>
<feature type="binding site" evidence="1">
    <location>
        <position position="129"/>
    </location>
    <ligand>
        <name>Zn(2+)</name>
        <dbReference type="ChEBI" id="CHEBI:29105"/>
        <note>catalytic</note>
    </ligand>
</feature>
<feature type="binding site" evidence="1">
    <location>
        <position position="132"/>
    </location>
    <ligand>
        <name>Zn(2+)</name>
        <dbReference type="ChEBI" id="CHEBI:29105"/>
        <note>catalytic</note>
    </ligand>
</feature>
<accession>B7UFF9</accession>
<proteinExistence type="inferred from homology"/>
<organism>
    <name type="scientific">Escherichia coli O127:H6 (strain E2348/69 / EPEC)</name>
    <dbReference type="NCBI Taxonomy" id="574521"/>
    <lineage>
        <taxon>Bacteria</taxon>
        <taxon>Pseudomonadati</taxon>
        <taxon>Pseudomonadota</taxon>
        <taxon>Gammaproteobacteria</taxon>
        <taxon>Enterobacterales</taxon>
        <taxon>Enterobacteriaceae</taxon>
        <taxon>Escherichia</taxon>
    </lineage>
</organism>
<name>CDD_ECO27</name>
<evidence type="ECO:0000255" key="1">
    <source>
        <dbReference type="HAMAP-Rule" id="MF_01558"/>
    </source>
</evidence>
<evidence type="ECO:0000255" key="2">
    <source>
        <dbReference type="PROSITE-ProRule" id="PRU01083"/>
    </source>
</evidence>
<sequence length="294" mass="31567">MHPRFQTAFAQLADNLQSALEPILADKYFPALLTGEQVSSLKSATGLDEDALAFALLPLAAACARTPLSNFNVGAIARGVSGTWYFGANMEFIGATMQQTVHAEQSAISHAWLSGEKALAAITVNYTPCGHCRQFMNELNSGLDLRIHLPGREAHALRDYLPDAFGPKDLEIKTLLMDEQDHGYALTGDALSQAAIAAANRSHMPYSKSPSGVALECKDGRIFSGSYAENAAFNPTLPPLQGALILLNLKGYDYPDIQRAVLAEKADAPLIQWDATSATLKALGCHNIDRVLLA</sequence>
<protein>
    <recommendedName>
        <fullName evidence="1">Cytidine deaminase</fullName>
        <ecNumber evidence="1">3.5.4.5</ecNumber>
    </recommendedName>
    <alternativeName>
        <fullName evidence="1">Cytidine aminohydrolase</fullName>
        <shortName evidence="1">CDA</shortName>
    </alternativeName>
</protein>
<reference key="1">
    <citation type="journal article" date="2009" name="J. Bacteriol.">
        <title>Complete genome sequence and comparative genome analysis of enteropathogenic Escherichia coli O127:H6 strain E2348/69.</title>
        <authorList>
            <person name="Iguchi A."/>
            <person name="Thomson N.R."/>
            <person name="Ogura Y."/>
            <person name="Saunders D."/>
            <person name="Ooka T."/>
            <person name="Henderson I.R."/>
            <person name="Harris D."/>
            <person name="Asadulghani M."/>
            <person name="Kurokawa K."/>
            <person name="Dean P."/>
            <person name="Kenny B."/>
            <person name="Quail M.A."/>
            <person name="Thurston S."/>
            <person name="Dougan G."/>
            <person name="Hayashi T."/>
            <person name="Parkhill J."/>
            <person name="Frankel G."/>
        </authorList>
    </citation>
    <scope>NUCLEOTIDE SEQUENCE [LARGE SCALE GENOMIC DNA]</scope>
    <source>
        <strain>E2348/69 / EPEC</strain>
    </source>
</reference>